<feature type="chain" id="PRO_0000088532" description="Photosystem I P700 chlorophyll a apoprotein A1">
    <location>
        <begin position="1"/>
        <end position="750"/>
    </location>
</feature>
<feature type="transmembrane region" description="Helical; Name=I" evidence="1">
    <location>
        <begin position="70"/>
        <end position="93"/>
    </location>
</feature>
<feature type="transmembrane region" description="Helical; Name=II" evidence="1">
    <location>
        <begin position="156"/>
        <end position="179"/>
    </location>
</feature>
<feature type="transmembrane region" description="Helical; Name=III" evidence="1">
    <location>
        <begin position="195"/>
        <end position="219"/>
    </location>
</feature>
<feature type="transmembrane region" description="Helical; Name=IV" evidence="1">
    <location>
        <begin position="291"/>
        <end position="309"/>
    </location>
</feature>
<feature type="transmembrane region" description="Helical; Name=V" evidence="1">
    <location>
        <begin position="346"/>
        <end position="369"/>
    </location>
</feature>
<feature type="transmembrane region" description="Helical; Name=VI" evidence="1">
    <location>
        <begin position="385"/>
        <end position="411"/>
    </location>
</feature>
<feature type="transmembrane region" description="Helical; Name=VII" evidence="1">
    <location>
        <begin position="433"/>
        <end position="455"/>
    </location>
</feature>
<feature type="transmembrane region" description="Helical; Name=VIII" evidence="1">
    <location>
        <begin position="531"/>
        <end position="549"/>
    </location>
</feature>
<feature type="transmembrane region" description="Helical; Name=IX" evidence="1">
    <location>
        <begin position="589"/>
        <end position="610"/>
    </location>
</feature>
<feature type="transmembrane region" description="Helical; Name=X" evidence="1">
    <location>
        <begin position="664"/>
        <end position="686"/>
    </location>
</feature>
<feature type="transmembrane region" description="Helical; Name=XI" evidence="1">
    <location>
        <begin position="724"/>
        <end position="744"/>
    </location>
</feature>
<feature type="binding site" evidence="1">
    <location>
        <position position="573"/>
    </location>
    <ligand>
        <name>[4Fe-4S] cluster</name>
        <dbReference type="ChEBI" id="CHEBI:49883"/>
        <note>ligand shared between dimeric partners</note>
    </ligand>
</feature>
<feature type="binding site" evidence="1">
    <location>
        <position position="582"/>
    </location>
    <ligand>
        <name>[4Fe-4S] cluster</name>
        <dbReference type="ChEBI" id="CHEBI:49883"/>
        <note>ligand shared between dimeric partners</note>
    </ligand>
</feature>
<feature type="binding site" description="axial binding residue" evidence="1">
    <location>
        <position position="675"/>
    </location>
    <ligand>
        <name>chlorophyll a'</name>
        <dbReference type="ChEBI" id="CHEBI:189419"/>
        <label>A1</label>
    </ligand>
    <ligandPart>
        <name>Mg</name>
        <dbReference type="ChEBI" id="CHEBI:25107"/>
    </ligandPart>
</feature>
<feature type="binding site" description="axial binding residue" evidence="1">
    <location>
        <position position="683"/>
    </location>
    <ligand>
        <name>chlorophyll a</name>
        <dbReference type="ChEBI" id="CHEBI:58416"/>
        <label>A3</label>
    </ligand>
    <ligandPart>
        <name>Mg</name>
        <dbReference type="ChEBI" id="CHEBI:25107"/>
    </ligandPart>
</feature>
<feature type="binding site" evidence="1">
    <location>
        <position position="691"/>
    </location>
    <ligand>
        <name>chlorophyll a</name>
        <dbReference type="ChEBI" id="CHEBI:58416"/>
        <label>A3</label>
    </ligand>
</feature>
<feature type="binding site" evidence="1">
    <location>
        <position position="692"/>
    </location>
    <ligand>
        <name>phylloquinone</name>
        <dbReference type="ChEBI" id="CHEBI:18067"/>
        <label>A</label>
    </ligand>
</feature>
<comment type="function">
    <text>PsaA and PsaB bind P700, the primary electron donor of photosystem I (PSI), as well as the electron acceptors A0, A1 and FX. PSI is a plastocyanin-ferredoxin oxidoreductase, converting photonic excitation into a charge separation, which transfers an electron from the donor P700 chlorophyll pair to the spectroscopically characterized acceptors A0, A1, FX, FA and FB in turn. Oxidized P700 is reduced on the lumenal side of the thylakoid membrane by plastocyanin.</text>
</comment>
<comment type="catalytic activity">
    <reaction evidence="1">
        <text>reduced [plastocyanin] + hnu + oxidized [2Fe-2S]-[ferredoxin] = oxidized [plastocyanin] + reduced [2Fe-2S]-[ferredoxin]</text>
        <dbReference type="Rhea" id="RHEA:30407"/>
        <dbReference type="Rhea" id="RHEA-COMP:10000"/>
        <dbReference type="Rhea" id="RHEA-COMP:10001"/>
        <dbReference type="Rhea" id="RHEA-COMP:10039"/>
        <dbReference type="Rhea" id="RHEA-COMP:10040"/>
        <dbReference type="ChEBI" id="CHEBI:29036"/>
        <dbReference type="ChEBI" id="CHEBI:30212"/>
        <dbReference type="ChEBI" id="CHEBI:33737"/>
        <dbReference type="ChEBI" id="CHEBI:33738"/>
        <dbReference type="ChEBI" id="CHEBI:49552"/>
        <dbReference type="EC" id="1.97.1.12"/>
    </reaction>
</comment>
<comment type="cofactor">
    <text evidence="1">P700 is a chlorophyll a/chlorophyll a' dimer, A0 is one or more chlorophyll a, A1 is one or both phylloquinones and FX is a shared 4Fe-4S iron-sulfur center.</text>
</comment>
<comment type="subunit">
    <text evidence="1">The PsaA/B heterodimer binds the P700 chlorophyll special pair and subsequent electron acceptors. PSI consists of a core antenna complex that captures photons, and an electron transfer chain that converts photonic excitation into a charge separation. The eukaryotic PSI reaction center is composed of at least 11 subunits.</text>
</comment>
<comment type="subcellular location">
    <subcellularLocation>
        <location>Plastid</location>
        <location>Chloroplast thylakoid membrane</location>
        <topology>Multi-pass membrane protein</topology>
    </subcellularLocation>
</comment>
<comment type="RNA editing">
    <location>
        <position position="77" evidence="2 3"/>
    </location>
    <location>
        <position position="96" evidence="2 3"/>
    </location>
    <location>
        <position position="136" evidence="2 3"/>
    </location>
    <location>
        <position position="240" evidence="2 3"/>
    </location>
    <location>
        <position position="367" evidence="2 3"/>
    </location>
    <location>
        <position position="531" evidence="2 3"/>
    </location>
    <location>
        <position position="605" evidence="2 3"/>
    </location>
    <location>
        <position position="606" evidence="2 3"/>
    </location>
    <location>
        <position position="655" evidence="2 3"/>
    </location>
    <location>
        <position position="669" evidence="2 3"/>
    </location>
    <text>The nonsense codons at positions 77, 136 and 655 are modified to sense codons.</text>
</comment>
<comment type="similarity">
    <text evidence="1">Belongs to the PsaA/PsaB family.</text>
</comment>
<sequence>MTIRSPEPEVKIVVEKDPVKTSFEKWAKPGHFSRTLAKGPSTTTWIWNLHADAHDFDSHTNDLEEVSRKVFSAHFGQLAIIFIWLSGMYFHGARFSNYEAWLGDPTHIKPSAQVVWPIVGQEILNGDVGGGFQGIQITSGFFQIWRASGITSELQLYSTAIGGLIFAALMLFAGWFHYHKAAPKLVWFQDVESMLNHHLAGLLGLGSLAWAGHQVHVSLPINELLDAGIDPKEIPLPHEFILNRDLLAQLFPSFAKGLTPFFTLNWSEYSDFLTFRGGLNPVTGGLWLTDTAHHHLAIAVVFLVAGHMYRTNWGIGHSIKEILEAHKGPFTGEGHKGLYEILTTSWHAQLALNLAMLGSLTIIVAHHMYSMPPYPYLAIDYSTQLSLFTHHMWIGGFTIVGAAAHAAIFMVRDYDPTSQYNNLLDRVLRHRDAIISHLNWACIFLGFHSFGLYIHNDTMSALGRPEDMFSDTAIQLQPIFAQWVQNTHVLAPNLTAPNATASTSLTWGGGDLVAVGGKVALLPISLGTADFLVHHIHAFTIHVTVLILLKGVLFARSSRLIPDKANLGFRFPCDGPGRGGTCQVSAWDHVFLGLFWMYNAISVVIFHFSWKMQSDVWGSLSNQGVVTHITGGNFAQSSITINGWLRDFLWAQAAQVIQSYGSSLSAYGLLFLGAHFVWAFSLMFLFSGRGYWQELIESIVWAHNKLKVAPAIQPRALSIVQGRAVGVAHYLLGGIATTWAFFLARIIAVG</sequence>
<accession>Q85B27</accession>
<keyword id="KW-0004">4Fe-4S</keyword>
<keyword id="KW-0148">Chlorophyll</keyword>
<keyword id="KW-0150">Chloroplast</keyword>
<keyword id="KW-0157">Chromophore</keyword>
<keyword id="KW-0249">Electron transport</keyword>
<keyword id="KW-0408">Iron</keyword>
<keyword id="KW-0411">Iron-sulfur</keyword>
<keyword id="KW-0460">Magnesium</keyword>
<keyword id="KW-0472">Membrane</keyword>
<keyword id="KW-0479">Metal-binding</keyword>
<keyword id="KW-0560">Oxidoreductase</keyword>
<keyword id="KW-0602">Photosynthesis</keyword>
<keyword id="KW-0603">Photosystem I</keyword>
<keyword id="KW-0934">Plastid</keyword>
<keyword id="KW-0691">RNA editing</keyword>
<keyword id="KW-0793">Thylakoid</keyword>
<keyword id="KW-0812">Transmembrane</keyword>
<keyword id="KW-1133">Transmembrane helix</keyword>
<keyword id="KW-0813">Transport</keyword>
<proteinExistence type="evidence at transcript level"/>
<name>PSAA_ANTAG</name>
<protein>
    <recommendedName>
        <fullName evidence="1">Photosystem I P700 chlorophyll a apoprotein A1</fullName>
        <ecNumber evidence="1">1.97.1.12</ecNumber>
    </recommendedName>
    <alternativeName>
        <fullName evidence="1">PSI-A</fullName>
    </alternativeName>
    <alternativeName>
        <fullName evidence="1">PsaA</fullName>
    </alternativeName>
</protein>
<geneLocation type="chloroplast"/>
<reference key="1">
    <citation type="journal article" date="2003" name="Nucleic Acids Res.">
        <title>The complete nucleotide sequence of the hornwort (Anthoceros formosae) chloroplast genome: insight into the earliest land plants.</title>
        <authorList>
            <person name="Kugita M."/>
            <person name="Kaneko A."/>
            <person name="Yamamoto Y."/>
            <person name="Takeya Y."/>
            <person name="Matsumoto T."/>
            <person name="Yoshinaga K."/>
        </authorList>
    </citation>
    <scope>NUCLEOTIDE SEQUENCE [LARGE SCALE GENOMIC DNA]</scope>
    <scope>RNA EDITING</scope>
</reference>
<reference key="2">
    <citation type="journal article" date="2003" name="Nucleic Acids Res.">
        <title>RNA editing in hornwort chloroplasts makes more than half the genes functional.</title>
        <authorList>
            <person name="Kugita M."/>
            <person name="Yamamoto Y."/>
            <person name="Fujikawa T."/>
            <person name="Matsumoto T."/>
            <person name="Yoshinaga K."/>
        </authorList>
    </citation>
    <scope>NUCLEOTIDE SEQUENCE [MRNA]</scope>
    <scope>RNA EDITING</scope>
    <source>
        <tissue>Thallus</tissue>
    </source>
</reference>
<organism>
    <name type="scientific">Anthoceros angustus</name>
    <name type="common">Hornwort</name>
    <name type="synonym">Anthoceros formosae</name>
    <dbReference type="NCBI Taxonomy" id="48387"/>
    <lineage>
        <taxon>Eukaryota</taxon>
        <taxon>Viridiplantae</taxon>
        <taxon>Streptophyta</taxon>
        <taxon>Embryophyta</taxon>
        <taxon>Anthocerotophyta</taxon>
        <taxon>Anthocerotopsida</taxon>
        <taxon>Anthocerotidae</taxon>
        <taxon>Anthocerotales</taxon>
        <taxon>Anthocerotaceae</taxon>
        <taxon>Anthoceros</taxon>
    </lineage>
</organism>
<evidence type="ECO:0000255" key="1">
    <source>
        <dbReference type="HAMAP-Rule" id="MF_00458"/>
    </source>
</evidence>
<evidence type="ECO:0000269" key="2">
    <source>
    </source>
</evidence>
<evidence type="ECO:0000269" key="3">
    <source>
    </source>
</evidence>
<gene>
    <name evidence="1" type="primary">psaA</name>
</gene>
<dbReference type="EC" id="1.97.1.12" evidence="1"/>
<dbReference type="EMBL" id="AB086179">
    <property type="protein sequence ID" value="BAC55349.1"/>
    <property type="molecule type" value="Genomic_DNA"/>
</dbReference>
<dbReference type="EMBL" id="AB087441">
    <property type="protein sequence ID" value="BAC55442.1"/>
    <property type="molecule type" value="mRNA"/>
</dbReference>
<dbReference type="RefSeq" id="NP_777413.1">
    <property type="nucleotide sequence ID" value="NC_004543.1"/>
</dbReference>
<dbReference type="SMR" id="Q85B27"/>
<dbReference type="GeneID" id="2553390"/>
<dbReference type="GO" id="GO:0009535">
    <property type="term" value="C:chloroplast thylakoid membrane"/>
    <property type="evidence" value="ECO:0007669"/>
    <property type="project" value="UniProtKB-SubCell"/>
</dbReference>
<dbReference type="GO" id="GO:0009522">
    <property type="term" value="C:photosystem I"/>
    <property type="evidence" value="ECO:0007669"/>
    <property type="project" value="UniProtKB-KW"/>
</dbReference>
<dbReference type="GO" id="GO:0051539">
    <property type="term" value="F:4 iron, 4 sulfur cluster binding"/>
    <property type="evidence" value="ECO:0007669"/>
    <property type="project" value="UniProtKB-KW"/>
</dbReference>
<dbReference type="GO" id="GO:0016168">
    <property type="term" value="F:chlorophyll binding"/>
    <property type="evidence" value="ECO:0007669"/>
    <property type="project" value="UniProtKB-KW"/>
</dbReference>
<dbReference type="GO" id="GO:0009055">
    <property type="term" value="F:electron transfer activity"/>
    <property type="evidence" value="ECO:0007669"/>
    <property type="project" value="UniProtKB-UniRule"/>
</dbReference>
<dbReference type="GO" id="GO:0000287">
    <property type="term" value="F:magnesium ion binding"/>
    <property type="evidence" value="ECO:0007669"/>
    <property type="project" value="UniProtKB-UniRule"/>
</dbReference>
<dbReference type="GO" id="GO:0016491">
    <property type="term" value="F:oxidoreductase activity"/>
    <property type="evidence" value="ECO:0007669"/>
    <property type="project" value="UniProtKB-KW"/>
</dbReference>
<dbReference type="GO" id="GO:0015979">
    <property type="term" value="P:photosynthesis"/>
    <property type="evidence" value="ECO:0007669"/>
    <property type="project" value="UniProtKB-UniRule"/>
</dbReference>
<dbReference type="FunFam" id="1.20.1130.10:FF:000001">
    <property type="entry name" value="Photosystem I P700 chlorophyll a apoprotein A2"/>
    <property type="match status" value="1"/>
</dbReference>
<dbReference type="Gene3D" id="1.20.1130.10">
    <property type="entry name" value="Photosystem I PsaA/PsaB"/>
    <property type="match status" value="1"/>
</dbReference>
<dbReference type="HAMAP" id="MF_00458">
    <property type="entry name" value="PSI_PsaA"/>
    <property type="match status" value="1"/>
</dbReference>
<dbReference type="InterPro" id="IPR006243">
    <property type="entry name" value="PSI_PsaA"/>
</dbReference>
<dbReference type="InterPro" id="IPR001280">
    <property type="entry name" value="PSI_PsaA/B"/>
</dbReference>
<dbReference type="InterPro" id="IPR020586">
    <property type="entry name" value="PSI_PsaA/B_CS"/>
</dbReference>
<dbReference type="InterPro" id="IPR036408">
    <property type="entry name" value="PSI_PsaA/B_sf"/>
</dbReference>
<dbReference type="NCBIfam" id="TIGR01335">
    <property type="entry name" value="psaA"/>
    <property type="match status" value="1"/>
</dbReference>
<dbReference type="PANTHER" id="PTHR30128">
    <property type="entry name" value="OUTER MEMBRANE PROTEIN, OMPA-RELATED"/>
    <property type="match status" value="1"/>
</dbReference>
<dbReference type="PANTHER" id="PTHR30128:SF19">
    <property type="entry name" value="PHOTOSYSTEM I P700 CHLOROPHYLL A APOPROTEIN A1-RELATED"/>
    <property type="match status" value="1"/>
</dbReference>
<dbReference type="Pfam" id="PF00223">
    <property type="entry name" value="PsaA_PsaB"/>
    <property type="match status" value="1"/>
</dbReference>
<dbReference type="PIRSF" id="PIRSF002905">
    <property type="entry name" value="PSI_A"/>
    <property type="match status" value="1"/>
</dbReference>
<dbReference type="PRINTS" id="PR00257">
    <property type="entry name" value="PHOTSYSPSAAB"/>
</dbReference>
<dbReference type="SUPFAM" id="SSF81558">
    <property type="entry name" value="Photosystem I subunits PsaA/PsaB"/>
    <property type="match status" value="1"/>
</dbReference>
<dbReference type="PROSITE" id="PS00419">
    <property type="entry name" value="PHOTOSYSTEM_I_PSAAB"/>
    <property type="match status" value="1"/>
</dbReference>